<protein>
    <recommendedName>
        <fullName evidence="6">1-pyrroline-5-carboxylate dehydrogenase 2</fullName>
        <shortName evidence="6">P5C dehydrogenase 2</shortName>
        <ecNumber evidence="1">1.2.1.88</ecNumber>
    </recommendedName>
    <alternativeName>
        <fullName evidence="1">L-glutamate gamma-semialdehyde dehydrogenase</fullName>
    </alternativeName>
</protein>
<sequence>MTTPYKHEPFTNFQDQNNVEAFKKALATVSEYLGKDYPLVINGERVETEAKIVSINPADKEEVVGRVSKASQEHAEQAIQAAAKAFEEWRYTSPEERAAVLFRAAAKVRRRKHEFSALLVKEAGKPWNEADADTAEAIDFMEYYARQMIELAKGKPVNSREGEKNQYVYTPTGVTVVIPPWNFLFAIMAGTTVAPIVTGNTVVLKPASATPVIAAKFVEVLEESGLPKGVVNFVPGSGAEVGDYLVDHPKTSLITFTGSREVGTRIFERAAKVQPGQQHLKRVIAEMGGKDTVVVDEDADIELAAQSIFTSAFGFAGQKCSAGSRAVVHEKVYDQVLERVIEITESKVTAKPDSADVYMGPVIDQGSYDKIMSYIEIGKQEGRLVSGGTGDDSKGYFIKPTIFADLDPKARLMQEEIFGPVVAFCKVSDFDEALEVANNTEYGLTGAVITNNRKHIERAKQEFHVGNLYFNRNCTGAIVGYHPFGGFKMSGTDSKAGGPDYLALHMQAKTISEMF</sequence>
<accession>P94391</accession>
<dbReference type="EC" id="1.2.1.88" evidence="1"/>
<dbReference type="EMBL" id="D50453">
    <property type="protein sequence ID" value="BAA08955.1"/>
    <property type="molecule type" value="Genomic_DNA"/>
</dbReference>
<dbReference type="EMBL" id="AL009126">
    <property type="protein sequence ID" value="CAB12115.2"/>
    <property type="molecule type" value="Genomic_DNA"/>
</dbReference>
<dbReference type="PIR" id="A69759">
    <property type="entry name" value="A69759"/>
</dbReference>
<dbReference type="RefSeq" id="NP_388203.2">
    <property type="nucleotide sequence ID" value="NC_000964.3"/>
</dbReference>
<dbReference type="SMR" id="P94391"/>
<dbReference type="FunCoup" id="P94391">
    <property type="interactions" value="171"/>
</dbReference>
<dbReference type="STRING" id="224308.BSU03210"/>
<dbReference type="jPOST" id="P94391"/>
<dbReference type="PaxDb" id="224308-BSU03210"/>
<dbReference type="EnsemblBacteria" id="CAB12115">
    <property type="protein sequence ID" value="CAB12115"/>
    <property type="gene ID" value="BSU_03210"/>
</dbReference>
<dbReference type="GeneID" id="938333"/>
<dbReference type="KEGG" id="bsu:BSU03210"/>
<dbReference type="PATRIC" id="fig|224308.179.peg.335"/>
<dbReference type="eggNOG" id="COG1012">
    <property type="taxonomic scope" value="Bacteria"/>
</dbReference>
<dbReference type="InParanoid" id="P94391"/>
<dbReference type="OrthoDB" id="9762913at2"/>
<dbReference type="PhylomeDB" id="P94391"/>
<dbReference type="BioCyc" id="BSUB:BSU03210-MONOMER"/>
<dbReference type="UniPathway" id="UPA00261">
    <property type="reaction ID" value="UER00374"/>
</dbReference>
<dbReference type="Proteomes" id="UP000001570">
    <property type="component" value="Chromosome"/>
</dbReference>
<dbReference type="GO" id="GO:0009898">
    <property type="term" value="C:cytoplasmic side of plasma membrane"/>
    <property type="evidence" value="ECO:0000318"/>
    <property type="project" value="GO_Central"/>
</dbReference>
<dbReference type="GO" id="GO:0003842">
    <property type="term" value="F:1-pyrroline-5-carboxylate dehydrogenase activity"/>
    <property type="evidence" value="ECO:0000318"/>
    <property type="project" value="GO_Central"/>
</dbReference>
<dbReference type="GO" id="GO:0004657">
    <property type="term" value="F:proline dehydrogenase activity"/>
    <property type="evidence" value="ECO:0000315"/>
    <property type="project" value="CACAO"/>
</dbReference>
<dbReference type="GO" id="GO:0006537">
    <property type="term" value="P:glutamate biosynthetic process"/>
    <property type="evidence" value="ECO:0007669"/>
    <property type="project" value="UniProtKB-UniRule"/>
</dbReference>
<dbReference type="GO" id="GO:0010133">
    <property type="term" value="P:proline catabolic process to glutamate"/>
    <property type="evidence" value="ECO:0000318"/>
    <property type="project" value="GO_Central"/>
</dbReference>
<dbReference type="CDD" id="cd07124">
    <property type="entry name" value="ALDH_PutA-P5CDH-RocA"/>
    <property type="match status" value="1"/>
</dbReference>
<dbReference type="FunFam" id="3.40.309.10:FF:000005">
    <property type="entry name" value="1-pyrroline-5-carboxylate dehydrogenase 1"/>
    <property type="match status" value="1"/>
</dbReference>
<dbReference type="FunFam" id="3.40.605.10:FF:000045">
    <property type="entry name" value="1-pyrroline-5-carboxylate dehydrogenase 1"/>
    <property type="match status" value="1"/>
</dbReference>
<dbReference type="Gene3D" id="3.40.605.10">
    <property type="entry name" value="Aldehyde Dehydrogenase, Chain A, domain 1"/>
    <property type="match status" value="1"/>
</dbReference>
<dbReference type="Gene3D" id="3.40.309.10">
    <property type="entry name" value="Aldehyde Dehydrogenase, Chain A, domain 2"/>
    <property type="match status" value="1"/>
</dbReference>
<dbReference type="HAMAP" id="MF_00733">
    <property type="entry name" value="RocA"/>
    <property type="match status" value="1"/>
</dbReference>
<dbReference type="InterPro" id="IPR016161">
    <property type="entry name" value="Ald_DH/histidinol_DH"/>
</dbReference>
<dbReference type="InterPro" id="IPR016163">
    <property type="entry name" value="Ald_DH_C"/>
</dbReference>
<dbReference type="InterPro" id="IPR016160">
    <property type="entry name" value="Ald_DH_CS_CYS"/>
</dbReference>
<dbReference type="InterPro" id="IPR029510">
    <property type="entry name" value="Ald_DH_CS_GLU"/>
</dbReference>
<dbReference type="InterPro" id="IPR016162">
    <property type="entry name" value="Ald_DH_N"/>
</dbReference>
<dbReference type="InterPro" id="IPR015590">
    <property type="entry name" value="Aldehyde_DH_dom"/>
</dbReference>
<dbReference type="InterPro" id="IPR050485">
    <property type="entry name" value="Proline_metab_enzyme"/>
</dbReference>
<dbReference type="InterPro" id="IPR005932">
    <property type="entry name" value="RocA"/>
</dbReference>
<dbReference type="InterPro" id="IPR047597">
    <property type="entry name" value="RocA_bacillales"/>
</dbReference>
<dbReference type="NCBIfam" id="TIGR01237">
    <property type="entry name" value="D1pyr5carbox2"/>
    <property type="match status" value="1"/>
</dbReference>
<dbReference type="NCBIfam" id="NF002852">
    <property type="entry name" value="PRK03137.1"/>
    <property type="match status" value="1"/>
</dbReference>
<dbReference type="PANTHER" id="PTHR42862">
    <property type="entry name" value="DELTA-1-PYRROLINE-5-CARBOXYLATE DEHYDROGENASE 1, ISOFORM A-RELATED"/>
    <property type="match status" value="1"/>
</dbReference>
<dbReference type="PANTHER" id="PTHR42862:SF1">
    <property type="entry name" value="DELTA-1-PYRROLINE-5-CARBOXYLATE DEHYDROGENASE 2, ISOFORM A-RELATED"/>
    <property type="match status" value="1"/>
</dbReference>
<dbReference type="Pfam" id="PF00171">
    <property type="entry name" value="Aldedh"/>
    <property type="match status" value="1"/>
</dbReference>
<dbReference type="SUPFAM" id="SSF53720">
    <property type="entry name" value="ALDH-like"/>
    <property type="match status" value="1"/>
</dbReference>
<dbReference type="PROSITE" id="PS00070">
    <property type="entry name" value="ALDEHYDE_DEHYDR_CYS"/>
    <property type="match status" value="1"/>
</dbReference>
<dbReference type="PROSITE" id="PS00687">
    <property type="entry name" value="ALDEHYDE_DEHYDR_GLU"/>
    <property type="match status" value="1"/>
</dbReference>
<keyword id="KW-0520">NAD</keyword>
<keyword id="KW-0560">Oxidoreductase</keyword>
<keyword id="KW-1185">Reference proteome</keyword>
<comment type="function">
    <text evidence="4">Important for the use of proline as a sole carbon and energy source or a sole nitrogen source.</text>
</comment>
<comment type="catalytic activity">
    <reaction evidence="1">
        <text>L-glutamate 5-semialdehyde + NAD(+) + H2O = L-glutamate + NADH + 2 H(+)</text>
        <dbReference type="Rhea" id="RHEA:30235"/>
        <dbReference type="ChEBI" id="CHEBI:15377"/>
        <dbReference type="ChEBI" id="CHEBI:15378"/>
        <dbReference type="ChEBI" id="CHEBI:29985"/>
        <dbReference type="ChEBI" id="CHEBI:57540"/>
        <dbReference type="ChEBI" id="CHEBI:57945"/>
        <dbReference type="ChEBI" id="CHEBI:58066"/>
        <dbReference type="EC" id="1.2.1.88"/>
    </reaction>
</comment>
<comment type="pathway">
    <text evidence="1 4">Amino-acid degradation; L-proline degradation into L-glutamate; L-glutamate from L-proline: step 2/2.</text>
</comment>
<comment type="induction">
    <text evidence="2 3 4">The expression of the putBCP operon is induced in a PutR-dependent fashion by very low concentrations of L-proline in the growth medium. CodY represses the operon by displacing PutR from DNA.</text>
</comment>
<comment type="disruption phenotype">
    <text evidence="4">Deletion of the putBCP operon abolishes L-proline utilization.</text>
</comment>
<comment type="similarity">
    <text evidence="1">Belongs to the aldehyde dehydrogenase family. RocA subfamily.</text>
</comment>
<reference key="1">
    <citation type="journal article" date="1996" name="Microbiology">
        <title>The 25 degrees-36 degrees region of the Bacillus subtilis chromosome: determination of the sequence of a 146 kb segment and identification of 113 genes.</title>
        <authorList>
            <person name="Yamane K."/>
            <person name="Kumano M."/>
            <person name="Kurita K."/>
        </authorList>
    </citation>
    <scope>NUCLEOTIDE SEQUENCE [GENOMIC DNA]</scope>
    <source>
        <strain>168</strain>
    </source>
</reference>
<reference key="2">
    <citation type="journal article" date="1997" name="Nature">
        <title>The complete genome sequence of the Gram-positive bacterium Bacillus subtilis.</title>
        <authorList>
            <person name="Kunst F."/>
            <person name="Ogasawara N."/>
            <person name="Moszer I."/>
            <person name="Albertini A.M."/>
            <person name="Alloni G."/>
            <person name="Azevedo V."/>
            <person name="Bertero M.G."/>
            <person name="Bessieres P."/>
            <person name="Bolotin A."/>
            <person name="Borchert S."/>
            <person name="Borriss R."/>
            <person name="Boursier L."/>
            <person name="Brans A."/>
            <person name="Braun M."/>
            <person name="Brignell S.C."/>
            <person name="Bron S."/>
            <person name="Brouillet S."/>
            <person name="Bruschi C.V."/>
            <person name="Caldwell B."/>
            <person name="Capuano V."/>
            <person name="Carter N.M."/>
            <person name="Choi S.-K."/>
            <person name="Codani J.-J."/>
            <person name="Connerton I.F."/>
            <person name="Cummings N.J."/>
            <person name="Daniel R.A."/>
            <person name="Denizot F."/>
            <person name="Devine K.M."/>
            <person name="Duesterhoeft A."/>
            <person name="Ehrlich S.D."/>
            <person name="Emmerson P.T."/>
            <person name="Entian K.-D."/>
            <person name="Errington J."/>
            <person name="Fabret C."/>
            <person name="Ferrari E."/>
            <person name="Foulger D."/>
            <person name="Fritz C."/>
            <person name="Fujita M."/>
            <person name="Fujita Y."/>
            <person name="Fuma S."/>
            <person name="Galizzi A."/>
            <person name="Galleron N."/>
            <person name="Ghim S.-Y."/>
            <person name="Glaser P."/>
            <person name="Goffeau A."/>
            <person name="Golightly E.J."/>
            <person name="Grandi G."/>
            <person name="Guiseppi G."/>
            <person name="Guy B.J."/>
            <person name="Haga K."/>
            <person name="Haiech J."/>
            <person name="Harwood C.R."/>
            <person name="Henaut A."/>
            <person name="Hilbert H."/>
            <person name="Holsappel S."/>
            <person name="Hosono S."/>
            <person name="Hullo M.-F."/>
            <person name="Itaya M."/>
            <person name="Jones L.-M."/>
            <person name="Joris B."/>
            <person name="Karamata D."/>
            <person name="Kasahara Y."/>
            <person name="Klaerr-Blanchard M."/>
            <person name="Klein C."/>
            <person name="Kobayashi Y."/>
            <person name="Koetter P."/>
            <person name="Koningstein G."/>
            <person name="Krogh S."/>
            <person name="Kumano M."/>
            <person name="Kurita K."/>
            <person name="Lapidus A."/>
            <person name="Lardinois S."/>
            <person name="Lauber J."/>
            <person name="Lazarevic V."/>
            <person name="Lee S.-M."/>
            <person name="Levine A."/>
            <person name="Liu H."/>
            <person name="Masuda S."/>
            <person name="Mauel C."/>
            <person name="Medigue C."/>
            <person name="Medina N."/>
            <person name="Mellado R.P."/>
            <person name="Mizuno M."/>
            <person name="Moestl D."/>
            <person name="Nakai S."/>
            <person name="Noback M."/>
            <person name="Noone D."/>
            <person name="O'Reilly M."/>
            <person name="Ogawa K."/>
            <person name="Ogiwara A."/>
            <person name="Oudega B."/>
            <person name="Park S.-H."/>
            <person name="Parro V."/>
            <person name="Pohl T.M."/>
            <person name="Portetelle D."/>
            <person name="Porwollik S."/>
            <person name="Prescott A.M."/>
            <person name="Presecan E."/>
            <person name="Pujic P."/>
            <person name="Purnelle B."/>
            <person name="Rapoport G."/>
            <person name="Rey M."/>
            <person name="Reynolds S."/>
            <person name="Rieger M."/>
            <person name="Rivolta C."/>
            <person name="Rocha E."/>
            <person name="Roche B."/>
            <person name="Rose M."/>
            <person name="Sadaie Y."/>
            <person name="Sato T."/>
            <person name="Scanlan E."/>
            <person name="Schleich S."/>
            <person name="Schroeter R."/>
            <person name="Scoffone F."/>
            <person name="Sekiguchi J."/>
            <person name="Sekowska A."/>
            <person name="Seror S.J."/>
            <person name="Serror P."/>
            <person name="Shin B.-S."/>
            <person name="Soldo B."/>
            <person name="Sorokin A."/>
            <person name="Tacconi E."/>
            <person name="Takagi T."/>
            <person name="Takahashi H."/>
            <person name="Takemaru K."/>
            <person name="Takeuchi M."/>
            <person name="Tamakoshi A."/>
            <person name="Tanaka T."/>
            <person name="Terpstra P."/>
            <person name="Tognoni A."/>
            <person name="Tosato V."/>
            <person name="Uchiyama S."/>
            <person name="Vandenbol M."/>
            <person name="Vannier F."/>
            <person name="Vassarotti A."/>
            <person name="Viari A."/>
            <person name="Wambutt R."/>
            <person name="Wedler E."/>
            <person name="Wedler H."/>
            <person name="Weitzenegger T."/>
            <person name="Winters P."/>
            <person name="Wipat A."/>
            <person name="Yamamoto H."/>
            <person name="Yamane K."/>
            <person name="Yasumoto K."/>
            <person name="Yata K."/>
            <person name="Yoshida K."/>
            <person name="Yoshikawa H.-F."/>
            <person name="Zumstein E."/>
            <person name="Yoshikawa H."/>
            <person name="Danchin A."/>
        </authorList>
    </citation>
    <scope>NUCLEOTIDE SEQUENCE [LARGE SCALE GENOMIC DNA]</scope>
    <source>
        <strain>168</strain>
    </source>
</reference>
<reference key="3">
    <citation type="journal article" date="2009" name="Microbiology">
        <title>From a consortium sequence to a unified sequence: the Bacillus subtilis 168 reference genome a decade later.</title>
        <authorList>
            <person name="Barbe V."/>
            <person name="Cruveiller S."/>
            <person name="Kunst F."/>
            <person name="Lenoble P."/>
            <person name="Meurice G."/>
            <person name="Sekowska A."/>
            <person name="Vallenet D."/>
            <person name="Wang T."/>
            <person name="Moszer I."/>
            <person name="Medigue C."/>
            <person name="Danchin A."/>
        </authorList>
    </citation>
    <scope>SEQUENCE REVISION TO 18 AND 239</scope>
</reference>
<reference key="4">
    <citation type="journal article" date="2011" name="J. Mol. Biol.">
        <title>Indirect repression by Bacillus subtilis CodY via displacement of the activator of the proline utilization operon.</title>
        <authorList>
            <person name="Belitsky B.R."/>
        </authorList>
    </citation>
    <scope>INDUCTION</scope>
</reference>
<reference key="5">
    <citation type="journal article" date="2011" name="Microbiology">
        <title>PrcR, a PucR-type transcriptional activator, is essential for proline utilization and mediates proline-responsive expression of the proline utilization operon putBCP in Bacillus subtilis.</title>
        <authorList>
            <person name="Huang S.C."/>
            <person name="Lin T.H."/>
            <person name="Shaw G.C."/>
        </authorList>
    </citation>
    <scope>INDUCTION</scope>
    <source>
        <strain>168</strain>
    </source>
</reference>
<reference key="6">
    <citation type="journal article" date="2012" name="J. Bacteriol.">
        <title>Proline utilization by Bacillus subtilis: uptake and catabolism.</title>
        <authorList>
            <person name="Moses S."/>
            <person name="Sinner T."/>
            <person name="Zaprasis A."/>
            <person name="Stoeveken N."/>
            <person name="Hoffmann T."/>
            <person name="Belitsky B.R."/>
            <person name="Sonenshein A.L."/>
            <person name="Bremer E."/>
        </authorList>
    </citation>
    <scope>FUNCTION</scope>
    <scope>PATHWAY</scope>
    <scope>INDUCTION</scope>
    <scope>DISRUPTION PHENOTYPE</scope>
    <source>
        <strain>168 / JH642</strain>
    </source>
</reference>
<organism>
    <name type="scientific">Bacillus subtilis (strain 168)</name>
    <dbReference type="NCBI Taxonomy" id="224308"/>
    <lineage>
        <taxon>Bacteria</taxon>
        <taxon>Bacillati</taxon>
        <taxon>Bacillota</taxon>
        <taxon>Bacilli</taxon>
        <taxon>Bacillales</taxon>
        <taxon>Bacillaceae</taxon>
        <taxon>Bacillus</taxon>
    </lineage>
</organism>
<evidence type="ECO:0000255" key="1">
    <source>
        <dbReference type="HAMAP-Rule" id="MF_00733"/>
    </source>
</evidence>
<evidence type="ECO:0000269" key="2">
    <source>
    </source>
</evidence>
<evidence type="ECO:0000269" key="3">
    <source>
    </source>
</evidence>
<evidence type="ECO:0000269" key="4">
    <source>
    </source>
</evidence>
<evidence type="ECO:0000303" key="5">
    <source>
    </source>
</evidence>
<evidence type="ECO:0000305" key="6"/>
<proteinExistence type="evidence at transcript level"/>
<name>ROCA2_BACSU</name>
<feature type="chain" id="PRO_0000056512" description="1-pyrroline-5-carboxylate dehydrogenase 2">
    <location>
        <begin position="1"/>
        <end position="515"/>
    </location>
</feature>
<feature type="active site" evidence="1">
    <location>
        <position position="286"/>
    </location>
</feature>
<feature type="active site" evidence="1">
    <location>
        <position position="320"/>
    </location>
</feature>
<feature type="sequence conflict" description="In Ref. 1; BAA08955." evidence="6" ref="1">
    <original>N</original>
    <variation>Y</variation>
    <location>
        <position position="18"/>
    </location>
</feature>
<feature type="sequence conflict" description="In Ref. 1; BAA08955." evidence="6" ref="1">
    <original>A</original>
    <variation>S</variation>
    <location>
        <position position="239"/>
    </location>
</feature>
<gene>
    <name evidence="5" type="primary">putC</name>
    <name type="synonym">ycgN</name>
    <name type="ordered locus">BSU03210</name>
</gene>